<protein>
    <recommendedName>
        <fullName evidence="1">Peptide chain release factor 1</fullName>
        <shortName evidence="1">RF-1</shortName>
    </recommendedName>
</protein>
<sequence>MKDSVIRKLEGLLERNEEVLALLSDASIIADQERFRALSKEYSQLEDVVRTFKSYQQAEEDFESAKEMMEEDDPELKEMAQEEYKATKEAIATLEAELQILLLPKDPNDDNNCFIEIRAGAGGDEAAIFAGDLFRMYSRYAESKRWQIEVMNTNEGEHGGFKEVIAKISGEGVYGKLKFESGGHRVQRVPETESQGRVHTSACTVIVLPEVPEAEAIEINKADLKVDTFRASGAGGQHVNKTDSAIRITHIPTGIVVECQDQRSQHKNRAQAMSVLAARIQAVEDEKRRSAEESTRRNLVSSGDRSERIRTYNYPQGRVSEHRINLTLYRLNEFMEGDIDCVVEPLIQENQADMLAALGEA</sequence>
<proteinExistence type="inferred from homology"/>
<dbReference type="EMBL" id="CP000931">
    <property type="protein sequence ID" value="ABZ77758.1"/>
    <property type="molecule type" value="Genomic_DNA"/>
</dbReference>
<dbReference type="RefSeq" id="WP_012278281.1">
    <property type="nucleotide sequence ID" value="NC_010334.1"/>
</dbReference>
<dbReference type="SMR" id="B0TR27"/>
<dbReference type="STRING" id="458817.Shal_3211"/>
<dbReference type="KEGG" id="shl:Shal_3211"/>
<dbReference type="eggNOG" id="COG0216">
    <property type="taxonomic scope" value="Bacteria"/>
</dbReference>
<dbReference type="HOGENOM" id="CLU_036856_0_1_6"/>
<dbReference type="OrthoDB" id="9806673at2"/>
<dbReference type="Proteomes" id="UP000001317">
    <property type="component" value="Chromosome"/>
</dbReference>
<dbReference type="GO" id="GO:0005737">
    <property type="term" value="C:cytoplasm"/>
    <property type="evidence" value="ECO:0007669"/>
    <property type="project" value="UniProtKB-SubCell"/>
</dbReference>
<dbReference type="GO" id="GO:0016149">
    <property type="term" value="F:translation release factor activity, codon specific"/>
    <property type="evidence" value="ECO:0007669"/>
    <property type="project" value="UniProtKB-UniRule"/>
</dbReference>
<dbReference type="FunFam" id="3.30.160.20:FF:000004">
    <property type="entry name" value="Peptide chain release factor 1"/>
    <property type="match status" value="1"/>
</dbReference>
<dbReference type="FunFam" id="3.30.70.1660:FF:000002">
    <property type="entry name" value="Peptide chain release factor 1"/>
    <property type="match status" value="1"/>
</dbReference>
<dbReference type="FunFam" id="3.30.70.1660:FF:000004">
    <property type="entry name" value="Peptide chain release factor 1"/>
    <property type="match status" value="1"/>
</dbReference>
<dbReference type="Gene3D" id="3.30.160.20">
    <property type="match status" value="1"/>
</dbReference>
<dbReference type="Gene3D" id="3.30.70.1660">
    <property type="match status" value="2"/>
</dbReference>
<dbReference type="Gene3D" id="6.10.140.1950">
    <property type="match status" value="1"/>
</dbReference>
<dbReference type="HAMAP" id="MF_00093">
    <property type="entry name" value="Rel_fac_1"/>
    <property type="match status" value="1"/>
</dbReference>
<dbReference type="InterPro" id="IPR005139">
    <property type="entry name" value="PCRF"/>
</dbReference>
<dbReference type="InterPro" id="IPR000352">
    <property type="entry name" value="Pep_chain_release_fac_I"/>
</dbReference>
<dbReference type="InterPro" id="IPR045853">
    <property type="entry name" value="Pep_chain_release_fac_I_sf"/>
</dbReference>
<dbReference type="InterPro" id="IPR050057">
    <property type="entry name" value="Prokaryotic/Mito_RF"/>
</dbReference>
<dbReference type="InterPro" id="IPR004373">
    <property type="entry name" value="RF-1"/>
</dbReference>
<dbReference type="NCBIfam" id="TIGR00019">
    <property type="entry name" value="prfA"/>
    <property type="match status" value="1"/>
</dbReference>
<dbReference type="NCBIfam" id="NF001859">
    <property type="entry name" value="PRK00591.1"/>
    <property type="match status" value="1"/>
</dbReference>
<dbReference type="PANTHER" id="PTHR43804">
    <property type="entry name" value="LD18447P"/>
    <property type="match status" value="1"/>
</dbReference>
<dbReference type="PANTHER" id="PTHR43804:SF7">
    <property type="entry name" value="LD18447P"/>
    <property type="match status" value="1"/>
</dbReference>
<dbReference type="Pfam" id="PF03462">
    <property type="entry name" value="PCRF"/>
    <property type="match status" value="1"/>
</dbReference>
<dbReference type="Pfam" id="PF00472">
    <property type="entry name" value="RF-1"/>
    <property type="match status" value="1"/>
</dbReference>
<dbReference type="SMART" id="SM00937">
    <property type="entry name" value="PCRF"/>
    <property type="match status" value="1"/>
</dbReference>
<dbReference type="SUPFAM" id="SSF75620">
    <property type="entry name" value="Release factor"/>
    <property type="match status" value="1"/>
</dbReference>
<dbReference type="PROSITE" id="PS00745">
    <property type="entry name" value="RF_PROK_I"/>
    <property type="match status" value="1"/>
</dbReference>
<accession>B0TR27</accession>
<evidence type="ECO:0000255" key="1">
    <source>
        <dbReference type="HAMAP-Rule" id="MF_00093"/>
    </source>
</evidence>
<evidence type="ECO:0000256" key="2">
    <source>
        <dbReference type="SAM" id="MobiDB-lite"/>
    </source>
</evidence>
<comment type="function">
    <text evidence="1">Peptide chain release factor 1 directs the termination of translation in response to the peptide chain termination codons UAG and UAA.</text>
</comment>
<comment type="subcellular location">
    <subcellularLocation>
        <location evidence="1">Cytoplasm</location>
    </subcellularLocation>
</comment>
<comment type="PTM">
    <text evidence="1">Methylated by PrmC. Methylation increases the termination efficiency of RF1.</text>
</comment>
<comment type="similarity">
    <text evidence="1">Belongs to the prokaryotic/mitochondrial release factor family.</text>
</comment>
<feature type="chain" id="PRO_1000075515" description="Peptide chain release factor 1">
    <location>
        <begin position="1"/>
        <end position="361"/>
    </location>
</feature>
<feature type="region of interest" description="Disordered" evidence="2">
    <location>
        <begin position="285"/>
        <end position="305"/>
    </location>
</feature>
<feature type="compositionally biased region" description="Basic and acidic residues" evidence="2">
    <location>
        <begin position="285"/>
        <end position="296"/>
    </location>
</feature>
<feature type="modified residue" description="N5-methylglutamine" evidence="1">
    <location>
        <position position="237"/>
    </location>
</feature>
<name>RF1_SHEHH</name>
<organism>
    <name type="scientific">Shewanella halifaxensis (strain HAW-EB4)</name>
    <dbReference type="NCBI Taxonomy" id="458817"/>
    <lineage>
        <taxon>Bacteria</taxon>
        <taxon>Pseudomonadati</taxon>
        <taxon>Pseudomonadota</taxon>
        <taxon>Gammaproteobacteria</taxon>
        <taxon>Alteromonadales</taxon>
        <taxon>Shewanellaceae</taxon>
        <taxon>Shewanella</taxon>
    </lineage>
</organism>
<gene>
    <name evidence="1" type="primary">prfA</name>
    <name type="ordered locus">Shal_3211</name>
</gene>
<keyword id="KW-0963">Cytoplasm</keyword>
<keyword id="KW-0488">Methylation</keyword>
<keyword id="KW-0648">Protein biosynthesis</keyword>
<reference key="1">
    <citation type="submission" date="2008-01" db="EMBL/GenBank/DDBJ databases">
        <title>Complete sequence of Shewanella halifaxensis HAW-EB4.</title>
        <authorList>
            <consortium name="US DOE Joint Genome Institute"/>
            <person name="Copeland A."/>
            <person name="Lucas S."/>
            <person name="Lapidus A."/>
            <person name="Glavina del Rio T."/>
            <person name="Dalin E."/>
            <person name="Tice H."/>
            <person name="Bruce D."/>
            <person name="Goodwin L."/>
            <person name="Pitluck S."/>
            <person name="Sims D."/>
            <person name="Brettin T."/>
            <person name="Detter J.C."/>
            <person name="Han C."/>
            <person name="Kuske C.R."/>
            <person name="Schmutz J."/>
            <person name="Larimer F."/>
            <person name="Land M."/>
            <person name="Hauser L."/>
            <person name="Kyrpides N."/>
            <person name="Kim E."/>
            <person name="Zhao J.-S."/>
            <person name="Richardson P."/>
        </authorList>
    </citation>
    <scope>NUCLEOTIDE SEQUENCE [LARGE SCALE GENOMIC DNA]</scope>
    <source>
        <strain>HAW-EB4</strain>
    </source>
</reference>